<protein>
    <recommendedName>
        <fullName evidence="1">Pup--protein ligase</fullName>
        <ecNumber evidence="1">6.3.1.19</ecNumber>
    </recommendedName>
    <alternativeName>
        <fullName evidence="1">Proteasome accessory factor A</fullName>
    </alternativeName>
    <alternativeName>
        <fullName evidence="1">Pup-conjugating enzyme</fullName>
    </alternativeName>
</protein>
<keyword id="KW-0067">ATP-binding</keyword>
<keyword id="KW-0436">Ligase</keyword>
<keyword id="KW-0460">Magnesium</keyword>
<keyword id="KW-0479">Metal-binding</keyword>
<keyword id="KW-0547">Nucleotide-binding</keyword>
<keyword id="KW-0833">Ubl conjugation pathway</keyword>
<name>PAFA_BIFAS</name>
<feature type="chain" id="PRO_0000395898" description="Pup--protein ligase">
    <location>
        <begin position="1"/>
        <end position="496"/>
    </location>
</feature>
<feature type="active site" description="Proton acceptor" evidence="1">
    <location>
        <position position="77"/>
    </location>
</feature>
<feature type="binding site" evidence="1">
    <location>
        <position position="30"/>
    </location>
    <ligand>
        <name>Mg(2+)</name>
        <dbReference type="ChEBI" id="CHEBI:18420"/>
    </ligand>
</feature>
<feature type="binding site" evidence="1">
    <location>
        <position position="73"/>
    </location>
    <ligand>
        <name>ATP</name>
        <dbReference type="ChEBI" id="CHEBI:30616"/>
    </ligand>
</feature>
<feature type="binding site" evidence="1">
    <location>
        <position position="75"/>
    </location>
    <ligand>
        <name>Mg(2+)</name>
        <dbReference type="ChEBI" id="CHEBI:18420"/>
    </ligand>
</feature>
<feature type="binding site" evidence="1">
    <location>
        <position position="83"/>
    </location>
    <ligand>
        <name>Mg(2+)</name>
        <dbReference type="ChEBI" id="CHEBI:18420"/>
    </ligand>
</feature>
<feature type="binding site" evidence="1">
    <location>
        <position position="86"/>
    </location>
    <ligand>
        <name>ATP</name>
        <dbReference type="ChEBI" id="CHEBI:30616"/>
    </ligand>
</feature>
<feature type="binding site" evidence="1">
    <location>
        <position position="450"/>
    </location>
    <ligand>
        <name>ATP</name>
        <dbReference type="ChEBI" id="CHEBI:30616"/>
    </ligand>
</feature>
<organism>
    <name type="scientific">Bifidobacterium animalis subsp. lactis (strain DSM 10140 / CCUG 37979 / JCM 10602 / LMG 18314 / NRRL B-41405 / UR1)</name>
    <dbReference type="NCBI Taxonomy" id="555970"/>
    <lineage>
        <taxon>Bacteria</taxon>
        <taxon>Bacillati</taxon>
        <taxon>Actinomycetota</taxon>
        <taxon>Actinomycetes</taxon>
        <taxon>Bifidobacteriales</taxon>
        <taxon>Bifidobacteriaceae</taxon>
        <taxon>Bifidobacterium</taxon>
    </lineage>
</organism>
<evidence type="ECO:0000255" key="1">
    <source>
        <dbReference type="HAMAP-Rule" id="MF_02111"/>
    </source>
</evidence>
<reference key="1">
    <citation type="journal article" date="2009" name="J. Bacteriol.">
        <title>Comparison of the complete genome sequences of Bifidobacterium animalis subsp. lactis DSM 10140 and Bl-04.</title>
        <authorList>
            <person name="Barrangou R."/>
            <person name="Briczinski E.P."/>
            <person name="Traeger L.L."/>
            <person name="Loquasto J.R."/>
            <person name="Richards M."/>
            <person name="Horvath P."/>
            <person name="Coute-Monvoisin A.-C."/>
            <person name="Leyer G."/>
            <person name="Rendulic S."/>
            <person name="Steele J.L."/>
            <person name="Broadbent J.R."/>
            <person name="Oberg T."/>
            <person name="Dudley E.G."/>
            <person name="Schuster S."/>
            <person name="Romero D.A."/>
            <person name="Roberts R.F."/>
        </authorList>
    </citation>
    <scope>NUCLEOTIDE SEQUENCE [LARGE SCALE GENOMIC DNA]</scope>
    <source>
        <strain>DSM 10140 / CCUG 37979 / JCM 10602 / LMG 18314 / NRRL B-41405 / UR1</strain>
    </source>
</reference>
<dbReference type="EC" id="6.3.1.19" evidence="1"/>
<dbReference type="EMBL" id="CP001606">
    <property type="protein sequence ID" value="ACS47581.1"/>
    <property type="molecule type" value="Genomic_DNA"/>
</dbReference>
<dbReference type="RefSeq" id="WP_004218911.1">
    <property type="nucleotide sequence ID" value="NC_012815.1"/>
</dbReference>
<dbReference type="SMR" id="C6AHX4"/>
<dbReference type="GeneID" id="29696548"/>
<dbReference type="KEGG" id="blt:Balat_0641"/>
<dbReference type="HOGENOM" id="CLU_040524_0_1_11"/>
<dbReference type="BioCyc" id="BANI555970:G1GVE-662-MONOMER"/>
<dbReference type="UniPathway" id="UPA00997"/>
<dbReference type="UniPathway" id="UPA00998"/>
<dbReference type="GO" id="GO:0005524">
    <property type="term" value="F:ATP binding"/>
    <property type="evidence" value="ECO:0007669"/>
    <property type="project" value="UniProtKB-UniRule"/>
</dbReference>
<dbReference type="GO" id="GO:0016879">
    <property type="term" value="F:ligase activity, forming carbon-nitrogen bonds"/>
    <property type="evidence" value="ECO:0007669"/>
    <property type="project" value="InterPro"/>
</dbReference>
<dbReference type="GO" id="GO:0000287">
    <property type="term" value="F:magnesium ion binding"/>
    <property type="evidence" value="ECO:0007669"/>
    <property type="project" value="UniProtKB-UniRule"/>
</dbReference>
<dbReference type="GO" id="GO:0019787">
    <property type="term" value="F:ubiquitin-like protein transferase activity"/>
    <property type="evidence" value="ECO:0007669"/>
    <property type="project" value="UniProtKB-UniRule"/>
</dbReference>
<dbReference type="GO" id="GO:0019941">
    <property type="term" value="P:modification-dependent protein catabolic process"/>
    <property type="evidence" value="ECO:0007669"/>
    <property type="project" value="UniProtKB-UniRule"/>
</dbReference>
<dbReference type="GO" id="GO:0010498">
    <property type="term" value="P:proteasomal protein catabolic process"/>
    <property type="evidence" value="ECO:0007669"/>
    <property type="project" value="UniProtKB-UniRule"/>
</dbReference>
<dbReference type="GO" id="GO:0070490">
    <property type="term" value="P:protein pupylation"/>
    <property type="evidence" value="ECO:0007669"/>
    <property type="project" value="UniProtKB-UniRule"/>
</dbReference>
<dbReference type="HAMAP" id="MF_02111">
    <property type="entry name" value="Pup_ligase"/>
    <property type="match status" value="1"/>
</dbReference>
<dbReference type="InterPro" id="IPR022279">
    <property type="entry name" value="Pup_ligase"/>
</dbReference>
<dbReference type="InterPro" id="IPR004347">
    <property type="entry name" value="Pup_ligase/deamidase"/>
</dbReference>
<dbReference type="PANTHER" id="PTHR42307">
    <property type="entry name" value="PUP DEAMIDASE/DEPUPYLASE"/>
    <property type="match status" value="1"/>
</dbReference>
<dbReference type="PANTHER" id="PTHR42307:SF3">
    <property type="entry name" value="PUP--PROTEIN LIGASE"/>
    <property type="match status" value="1"/>
</dbReference>
<dbReference type="Pfam" id="PF03136">
    <property type="entry name" value="Pup_ligase"/>
    <property type="match status" value="1"/>
</dbReference>
<comment type="function">
    <text evidence="1">Catalyzes the covalent attachment of the prokaryotic ubiquitin-like protein modifier Pup to the proteasomal substrate proteins, thereby targeting them for proteasomal degradation. This tagging system is termed pupylation. The ligation reaction involves the side-chain carboxylate of the C-terminal glutamate of Pup and the side-chain amino group of a substrate lysine.</text>
</comment>
<comment type="catalytic activity">
    <reaction evidence="1">
        <text>ATP + [prokaryotic ubiquitin-like protein]-L-glutamate + [protein]-L-lysine = ADP + phosphate + N(6)-([prokaryotic ubiquitin-like protein]-gamma-L-glutamyl)-[protein]-L-lysine.</text>
        <dbReference type="EC" id="6.3.1.19"/>
    </reaction>
</comment>
<comment type="pathway">
    <text evidence="1">Protein degradation; proteasomal Pup-dependent pathway.</text>
</comment>
<comment type="pathway">
    <text evidence="1">Protein modification; protein pupylation.</text>
</comment>
<comment type="miscellaneous">
    <text evidence="1">The reaction mechanism probably proceeds via the activation of Pup by phosphorylation of its C-terminal glutamate, which is then subject to nucleophilic attack by the substrate lysine, resulting in an isopeptide bond and the release of phosphate as a good leaving group.</text>
</comment>
<comment type="similarity">
    <text evidence="1">Belongs to the Pup ligase/Pup deamidase family. Pup-conjugating enzyme subfamily.</text>
</comment>
<sequence>MPQLHDSGSRAIQPSDQTHQHDFARIFGIETEYGVSVTDIPEPMDASHVAMTMFQPVVRRARSTNTYVENGSRLYLDVGSHPEYATAEAICPSDALLSDLAGEQTMRSMGLDAQRRLRESDAQNRHATLHLYKNNADSAGHSFGCHENYLVRRFVNLDMIQHVLLPFLITRQIYTGAGRFDGERLLFTQRAAFVDETVSSATTRSRPMINTRDEPHANPDDYRRLHVIIGDSNRSQWATLMKCATTHLVLCMMEHAARSGCETELEAFALADPIAANHAINTDGAHARIALAAGRSTTALELQQMMLEQVESFAAHHGDALEASLRYDALCNVEWIVGQWRWVLDRLAANDIETLSHVVDWASKQVFFNRLQSRGTVTPARLRQLDLDYHDIANGRLYPSLCAHGLMRTLVDADQIHDAVSTPPPHTRAVLRGRFVAAASHTDAVYDCDWTTLKLVRPVHMEAVLLDPFHDEPTKQYDKLMGELGDARADGDEAPV</sequence>
<gene>
    <name evidence="1" type="primary">pafA</name>
    <name type="ordered locus">Balat_0641</name>
</gene>
<accession>C6AHX4</accession>
<proteinExistence type="inferred from homology"/>